<dbReference type="EMBL" id="AL445064">
    <property type="protein sequence ID" value="CAC11657.1"/>
    <property type="molecule type" value="Genomic_DNA"/>
</dbReference>
<dbReference type="RefSeq" id="WP_010900942.1">
    <property type="nucleotide sequence ID" value="NC_002578.1"/>
</dbReference>
<dbReference type="SMR" id="P82853"/>
<dbReference type="STRING" id="273075.gene:9571735"/>
<dbReference type="PaxDb" id="273075-Ta0517"/>
<dbReference type="EnsemblBacteria" id="CAC11657">
    <property type="protein sequence ID" value="CAC11657"/>
    <property type="gene ID" value="CAC11657"/>
</dbReference>
<dbReference type="KEGG" id="tac:Ta0517"/>
<dbReference type="eggNOG" id="arCOG00958">
    <property type="taxonomic scope" value="Archaea"/>
</dbReference>
<dbReference type="HOGENOM" id="CLU_139698_5_6_2"/>
<dbReference type="InParanoid" id="P82853"/>
<dbReference type="OrthoDB" id="15347at2157"/>
<dbReference type="Proteomes" id="UP000001024">
    <property type="component" value="Chromosome"/>
</dbReference>
<dbReference type="GO" id="GO:0051539">
    <property type="term" value="F:4 iron, 4 sulfur cluster binding"/>
    <property type="evidence" value="ECO:0007669"/>
    <property type="project" value="UniProtKB-KW"/>
</dbReference>
<dbReference type="GO" id="GO:0046872">
    <property type="term" value="F:metal ion binding"/>
    <property type="evidence" value="ECO:0007669"/>
    <property type="project" value="UniProtKB-KW"/>
</dbReference>
<dbReference type="GO" id="GO:0016491">
    <property type="term" value="F:oxidoreductase activity"/>
    <property type="evidence" value="ECO:0007669"/>
    <property type="project" value="UniProtKB-ARBA"/>
</dbReference>
<dbReference type="Gene3D" id="3.30.70.20">
    <property type="match status" value="1"/>
</dbReference>
<dbReference type="Gene3D" id="3.30.70.3270">
    <property type="match status" value="1"/>
</dbReference>
<dbReference type="InterPro" id="IPR017896">
    <property type="entry name" value="4Fe4S_Fe-S-bd"/>
</dbReference>
<dbReference type="InterPro" id="IPR017900">
    <property type="entry name" value="4Fe4S_Fe_S_CS"/>
</dbReference>
<dbReference type="InterPro" id="IPR050572">
    <property type="entry name" value="Fe-S_Ferredoxin"/>
</dbReference>
<dbReference type="PANTHER" id="PTHR43687">
    <property type="entry name" value="ADENYLYLSULFATE REDUCTASE, BETA SUBUNIT"/>
    <property type="match status" value="1"/>
</dbReference>
<dbReference type="PANTHER" id="PTHR43687:SF6">
    <property type="entry name" value="L-ASPARTATE SEMIALDEHYDE SULFURTRANSFERASE IRON-SULFUR SUBUNIT"/>
    <property type="match status" value="1"/>
</dbReference>
<dbReference type="Pfam" id="PF00037">
    <property type="entry name" value="Fer4"/>
    <property type="match status" value="2"/>
</dbReference>
<dbReference type="SUPFAM" id="SSF54862">
    <property type="entry name" value="4Fe-4S ferredoxins"/>
    <property type="match status" value="1"/>
</dbReference>
<dbReference type="PROSITE" id="PS00198">
    <property type="entry name" value="4FE4S_FER_1"/>
    <property type="match status" value="2"/>
</dbReference>
<dbReference type="PROSITE" id="PS51379">
    <property type="entry name" value="4FE4S_FER_2"/>
    <property type="match status" value="2"/>
</dbReference>
<comment type="function">
    <text>Ferredoxins are iron-sulfur proteins that transfer electrons in a wide variety of metabolic reactions.</text>
</comment>
<comment type="cofactor">
    <cofactor evidence="1">
        <name>[4Fe-4S] cluster</name>
        <dbReference type="ChEBI" id="CHEBI:49883"/>
    </cofactor>
    <text evidence="1">Binds 2 [4Fe-4S] clusters.</text>
</comment>
<name>FER2_THEAC</name>
<protein>
    <recommendedName>
        <fullName>Probable ferredoxin TA0517</fullName>
    </recommendedName>
</protein>
<accession>P82853</accession>
<organism>
    <name type="scientific">Thermoplasma acidophilum (strain ATCC 25905 / DSM 1728 / JCM 9062 / NBRC 15155 / AMRC-C165)</name>
    <dbReference type="NCBI Taxonomy" id="273075"/>
    <lineage>
        <taxon>Archaea</taxon>
        <taxon>Methanobacteriati</taxon>
        <taxon>Thermoplasmatota</taxon>
        <taxon>Thermoplasmata</taxon>
        <taxon>Thermoplasmatales</taxon>
        <taxon>Thermoplasmataceae</taxon>
        <taxon>Thermoplasma</taxon>
    </lineage>
</organism>
<proteinExistence type="inferred from homology"/>
<sequence>MVELKVKTEMDVDRNLCNYCGACVGMCPTDAIWLDETVIKIHEEKCIECGFCIVGCPTGAITAEWFHGNL</sequence>
<reference key="1">
    <citation type="journal article" date="2000" name="Nature">
        <title>The genome sequence of the thermoacidophilic scavenger Thermoplasma acidophilum.</title>
        <authorList>
            <person name="Ruepp A."/>
            <person name="Graml W."/>
            <person name="Santos-Martinez M.-L."/>
            <person name="Koretke K.K."/>
            <person name="Volker C."/>
            <person name="Mewes H.-W."/>
            <person name="Frishman D."/>
            <person name="Stocker S."/>
            <person name="Lupas A.N."/>
            <person name="Baumeister W."/>
        </authorList>
    </citation>
    <scope>NUCLEOTIDE SEQUENCE [LARGE SCALE GENOMIC DNA]</scope>
    <source>
        <strain>ATCC 25905 / DSM 1728 / JCM 9062 / NBRC 15155 / AMRC-C165</strain>
    </source>
</reference>
<keyword id="KW-0004">4Fe-4S</keyword>
<keyword id="KW-0249">Electron transport</keyword>
<keyword id="KW-0408">Iron</keyword>
<keyword id="KW-0411">Iron-sulfur</keyword>
<keyword id="KW-0479">Metal-binding</keyword>
<keyword id="KW-1185">Reference proteome</keyword>
<keyword id="KW-0677">Repeat</keyword>
<keyword id="KW-0813">Transport</keyword>
<gene>
    <name type="ordered locus">Ta0517</name>
</gene>
<evidence type="ECO:0000250" key="1"/>
<evidence type="ECO:0000255" key="2">
    <source>
        <dbReference type="PROSITE-ProRule" id="PRU00711"/>
    </source>
</evidence>
<feature type="chain" id="PRO_0000159156" description="Probable ferredoxin TA0517">
    <location>
        <begin position="1"/>
        <end position="70"/>
    </location>
</feature>
<feature type="domain" description="4Fe-4S ferredoxin-type 1" evidence="2">
    <location>
        <begin position="8"/>
        <end position="36"/>
    </location>
</feature>
<feature type="domain" description="4Fe-4S ferredoxin-type 2" evidence="2">
    <location>
        <begin position="37"/>
        <end position="66"/>
    </location>
</feature>
<feature type="binding site" evidence="1">
    <location>
        <position position="17"/>
    </location>
    <ligand>
        <name>[4Fe-4S] cluster</name>
        <dbReference type="ChEBI" id="CHEBI:49883"/>
        <label>1</label>
    </ligand>
</feature>
<feature type="binding site" evidence="1">
    <location>
        <position position="20"/>
    </location>
    <ligand>
        <name>[4Fe-4S] cluster</name>
        <dbReference type="ChEBI" id="CHEBI:49883"/>
        <label>1</label>
    </ligand>
</feature>
<feature type="binding site" evidence="1">
    <location>
        <position position="23"/>
    </location>
    <ligand>
        <name>[4Fe-4S] cluster</name>
        <dbReference type="ChEBI" id="CHEBI:49883"/>
        <label>1</label>
    </ligand>
</feature>
<feature type="binding site" evidence="1">
    <location>
        <position position="27"/>
    </location>
    <ligand>
        <name>[4Fe-4S] cluster</name>
        <dbReference type="ChEBI" id="CHEBI:49883"/>
        <label>2</label>
    </ligand>
</feature>
<feature type="binding site" evidence="1">
    <location>
        <position position="46"/>
    </location>
    <ligand>
        <name>[4Fe-4S] cluster</name>
        <dbReference type="ChEBI" id="CHEBI:49883"/>
        <label>2</label>
    </ligand>
</feature>
<feature type="binding site" evidence="1">
    <location>
        <position position="49"/>
    </location>
    <ligand>
        <name>[4Fe-4S] cluster</name>
        <dbReference type="ChEBI" id="CHEBI:49883"/>
        <label>2</label>
    </ligand>
</feature>
<feature type="binding site" evidence="1">
    <location>
        <position position="52"/>
    </location>
    <ligand>
        <name>[4Fe-4S] cluster</name>
        <dbReference type="ChEBI" id="CHEBI:49883"/>
        <label>2</label>
    </ligand>
</feature>
<feature type="binding site" evidence="1">
    <location>
        <position position="56"/>
    </location>
    <ligand>
        <name>[4Fe-4S] cluster</name>
        <dbReference type="ChEBI" id="CHEBI:49883"/>
        <label>1</label>
    </ligand>
</feature>